<feature type="chain" id="PRO_0000174433" description="S-adenosylmethionine synthase isoform type-1">
    <location>
        <begin position="1"/>
        <end position="396"/>
    </location>
</feature>
<feature type="region of interest" description="Flexible loop" evidence="1">
    <location>
        <begin position="114"/>
        <end position="126"/>
    </location>
</feature>
<feature type="binding site" evidence="2">
    <location>
        <position position="24"/>
    </location>
    <ligand>
        <name>Mg(2+)</name>
        <dbReference type="ChEBI" id="CHEBI:18420"/>
    </ligand>
</feature>
<feature type="binding site" description="in other chain" evidence="2">
    <location>
        <position position="30"/>
    </location>
    <ligand>
        <name>ATP</name>
        <dbReference type="ChEBI" id="CHEBI:30616"/>
        <note>ligand shared between two neighboring subunits</note>
    </ligand>
</feature>
<feature type="binding site" evidence="1">
    <location>
        <position position="58"/>
    </location>
    <ligand>
        <name>K(+)</name>
        <dbReference type="ChEBI" id="CHEBI:29103"/>
    </ligand>
</feature>
<feature type="binding site" description="in other chain" evidence="1">
    <location>
        <position position="71"/>
    </location>
    <ligand>
        <name>L-methionine</name>
        <dbReference type="ChEBI" id="CHEBI:57844"/>
        <note>ligand shared between two neighboring subunits</note>
    </ligand>
</feature>
<feature type="binding site" description="in other chain" evidence="1">
    <location>
        <position position="114"/>
    </location>
    <ligand>
        <name>L-methionine</name>
        <dbReference type="ChEBI" id="CHEBI:57844"/>
        <note>ligand shared between two neighboring subunits</note>
    </ligand>
</feature>
<feature type="binding site" description="in other chain" evidence="3">
    <location>
        <begin position="180"/>
        <end position="182"/>
    </location>
    <ligand>
        <name>ATP</name>
        <dbReference type="ChEBI" id="CHEBI:30616"/>
        <note>ligand shared between two neighboring subunits</note>
    </ligand>
</feature>
<feature type="binding site" description="in other chain" evidence="3">
    <location>
        <begin position="248"/>
        <end position="251"/>
    </location>
    <ligand>
        <name>ATP</name>
        <dbReference type="ChEBI" id="CHEBI:30616"/>
        <note>ligand shared between two neighboring subunits</note>
    </ligand>
</feature>
<feature type="binding site" description="in other chain" evidence="2">
    <location>
        <position position="259"/>
    </location>
    <ligand>
        <name>ATP</name>
        <dbReference type="ChEBI" id="CHEBI:30616"/>
        <note>ligand shared between two neighboring subunits</note>
    </ligand>
</feature>
<feature type="binding site" evidence="1">
    <location>
        <position position="259"/>
    </location>
    <ligand>
        <name>L-methionine</name>
        <dbReference type="ChEBI" id="CHEBI:57844"/>
        <note>ligand shared between two neighboring subunits</note>
    </ligand>
</feature>
<feature type="binding site" description="in other chain" evidence="1">
    <location>
        <begin position="265"/>
        <end position="266"/>
    </location>
    <ligand>
        <name>ATP</name>
        <dbReference type="ChEBI" id="CHEBI:30616"/>
        <note>ligand shared between two neighboring subunits</note>
    </ligand>
</feature>
<feature type="binding site" evidence="2">
    <location>
        <position position="282"/>
    </location>
    <ligand>
        <name>ATP</name>
        <dbReference type="ChEBI" id="CHEBI:30616"/>
        <note>ligand shared between two neighboring subunits</note>
    </ligand>
</feature>
<feature type="binding site" evidence="2">
    <location>
        <position position="286"/>
    </location>
    <ligand>
        <name>ATP</name>
        <dbReference type="ChEBI" id="CHEBI:30616"/>
        <note>ligand shared between two neighboring subunits</note>
    </ligand>
</feature>
<feature type="binding site" evidence="2">
    <location>
        <position position="290"/>
    </location>
    <ligand>
        <name>ATP</name>
        <dbReference type="ChEBI" id="CHEBI:30616"/>
        <note>ligand shared between two neighboring subunits</note>
    </ligand>
</feature>
<feature type="binding site" description="in other chain" evidence="1">
    <location>
        <position position="290"/>
    </location>
    <ligand>
        <name>L-methionine</name>
        <dbReference type="ChEBI" id="CHEBI:57844"/>
        <note>ligand shared between two neighboring subunits</note>
    </ligand>
</feature>
<feature type="modified residue" description="S-nitrosocysteine" evidence="2">
    <location>
        <position position="121"/>
    </location>
</feature>
<feature type="disulfide bond" evidence="2">
    <location>
        <begin position="35"/>
        <end position="61"/>
    </location>
</feature>
<reference key="1">
    <citation type="journal article" date="1993" name="J. Biol. Chem.">
        <title>Cloning and expression of murine S-adenosylmethionine synthetase.</title>
        <authorList>
            <person name="Sakata S.F."/>
            <person name="Shelly L.L."/>
            <person name="Ruppert S."/>
            <person name="Schutz G."/>
            <person name="Chou J.Y."/>
        </authorList>
    </citation>
    <scope>NUCLEOTIDE SEQUENCE [MRNA]</scope>
    <scope>FUNCTION</scope>
    <scope>CATALYTIC ACTIVITY</scope>
    <scope>PATHWAY</scope>
    <source>
        <tissue>Liver</tissue>
    </source>
</reference>
<reference key="2">
    <citation type="journal article" date="2005" name="Science">
        <title>The transcriptional landscape of the mammalian genome.</title>
        <authorList>
            <person name="Carninci P."/>
            <person name="Kasukawa T."/>
            <person name="Katayama S."/>
            <person name="Gough J."/>
            <person name="Frith M.C."/>
            <person name="Maeda N."/>
            <person name="Oyama R."/>
            <person name="Ravasi T."/>
            <person name="Lenhard B."/>
            <person name="Wells C."/>
            <person name="Kodzius R."/>
            <person name="Shimokawa K."/>
            <person name="Bajic V.B."/>
            <person name="Brenner S.E."/>
            <person name="Batalov S."/>
            <person name="Forrest A.R."/>
            <person name="Zavolan M."/>
            <person name="Davis M.J."/>
            <person name="Wilming L.G."/>
            <person name="Aidinis V."/>
            <person name="Allen J.E."/>
            <person name="Ambesi-Impiombato A."/>
            <person name="Apweiler R."/>
            <person name="Aturaliya R.N."/>
            <person name="Bailey T.L."/>
            <person name="Bansal M."/>
            <person name="Baxter L."/>
            <person name="Beisel K.W."/>
            <person name="Bersano T."/>
            <person name="Bono H."/>
            <person name="Chalk A.M."/>
            <person name="Chiu K.P."/>
            <person name="Choudhary V."/>
            <person name="Christoffels A."/>
            <person name="Clutterbuck D.R."/>
            <person name="Crowe M.L."/>
            <person name="Dalla E."/>
            <person name="Dalrymple B.P."/>
            <person name="de Bono B."/>
            <person name="Della Gatta G."/>
            <person name="di Bernardo D."/>
            <person name="Down T."/>
            <person name="Engstrom P."/>
            <person name="Fagiolini M."/>
            <person name="Faulkner G."/>
            <person name="Fletcher C.F."/>
            <person name="Fukushima T."/>
            <person name="Furuno M."/>
            <person name="Futaki S."/>
            <person name="Gariboldi M."/>
            <person name="Georgii-Hemming P."/>
            <person name="Gingeras T.R."/>
            <person name="Gojobori T."/>
            <person name="Green R.E."/>
            <person name="Gustincich S."/>
            <person name="Harbers M."/>
            <person name="Hayashi Y."/>
            <person name="Hensch T.K."/>
            <person name="Hirokawa N."/>
            <person name="Hill D."/>
            <person name="Huminiecki L."/>
            <person name="Iacono M."/>
            <person name="Ikeo K."/>
            <person name="Iwama A."/>
            <person name="Ishikawa T."/>
            <person name="Jakt M."/>
            <person name="Kanapin A."/>
            <person name="Katoh M."/>
            <person name="Kawasawa Y."/>
            <person name="Kelso J."/>
            <person name="Kitamura H."/>
            <person name="Kitano H."/>
            <person name="Kollias G."/>
            <person name="Krishnan S.P."/>
            <person name="Kruger A."/>
            <person name="Kummerfeld S.K."/>
            <person name="Kurochkin I.V."/>
            <person name="Lareau L.F."/>
            <person name="Lazarevic D."/>
            <person name="Lipovich L."/>
            <person name="Liu J."/>
            <person name="Liuni S."/>
            <person name="McWilliam S."/>
            <person name="Madan Babu M."/>
            <person name="Madera M."/>
            <person name="Marchionni L."/>
            <person name="Matsuda H."/>
            <person name="Matsuzawa S."/>
            <person name="Miki H."/>
            <person name="Mignone F."/>
            <person name="Miyake S."/>
            <person name="Morris K."/>
            <person name="Mottagui-Tabar S."/>
            <person name="Mulder N."/>
            <person name="Nakano N."/>
            <person name="Nakauchi H."/>
            <person name="Ng P."/>
            <person name="Nilsson R."/>
            <person name="Nishiguchi S."/>
            <person name="Nishikawa S."/>
            <person name="Nori F."/>
            <person name="Ohara O."/>
            <person name="Okazaki Y."/>
            <person name="Orlando V."/>
            <person name="Pang K.C."/>
            <person name="Pavan W.J."/>
            <person name="Pavesi G."/>
            <person name="Pesole G."/>
            <person name="Petrovsky N."/>
            <person name="Piazza S."/>
            <person name="Reed J."/>
            <person name="Reid J.F."/>
            <person name="Ring B.Z."/>
            <person name="Ringwald M."/>
            <person name="Rost B."/>
            <person name="Ruan Y."/>
            <person name="Salzberg S.L."/>
            <person name="Sandelin A."/>
            <person name="Schneider C."/>
            <person name="Schoenbach C."/>
            <person name="Sekiguchi K."/>
            <person name="Semple C.A."/>
            <person name="Seno S."/>
            <person name="Sessa L."/>
            <person name="Sheng Y."/>
            <person name="Shibata Y."/>
            <person name="Shimada H."/>
            <person name="Shimada K."/>
            <person name="Silva D."/>
            <person name="Sinclair B."/>
            <person name="Sperling S."/>
            <person name="Stupka E."/>
            <person name="Sugiura K."/>
            <person name="Sultana R."/>
            <person name="Takenaka Y."/>
            <person name="Taki K."/>
            <person name="Tammoja K."/>
            <person name="Tan S.L."/>
            <person name="Tang S."/>
            <person name="Taylor M.S."/>
            <person name="Tegner J."/>
            <person name="Teichmann S.A."/>
            <person name="Ueda H.R."/>
            <person name="van Nimwegen E."/>
            <person name="Verardo R."/>
            <person name="Wei C.L."/>
            <person name="Yagi K."/>
            <person name="Yamanishi H."/>
            <person name="Zabarovsky E."/>
            <person name="Zhu S."/>
            <person name="Zimmer A."/>
            <person name="Hide W."/>
            <person name="Bult C."/>
            <person name="Grimmond S.M."/>
            <person name="Teasdale R.D."/>
            <person name="Liu E.T."/>
            <person name="Brusic V."/>
            <person name="Quackenbush J."/>
            <person name="Wahlestedt C."/>
            <person name="Mattick J.S."/>
            <person name="Hume D.A."/>
            <person name="Kai C."/>
            <person name="Sasaki D."/>
            <person name="Tomaru Y."/>
            <person name="Fukuda S."/>
            <person name="Kanamori-Katayama M."/>
            <person name="Suzuki M."/>
            <person name="Aoki J."/>
            <person name="Arakawa T."/>
            <person name="Iida J."/>
            <person name="Imamura K."/>
            <person name="Itoh M."/>
            <person name="Kato T."/>
            <person name="Kawaji H."/>
            <person name="Kawagashira N."/>
            <person name="Kawashima T."/>
            <person name="Kojima M."/>
            <person name="Kondo S."/>
            <person name="Konno H."/>
            <person name="Nakano K."/>
            <person name="Ninomiya N."/>
            <person name="Nishio T."/>
            <person name="Okada M."/>
            <person name="Plessy C."/>
            <person name="Shibata K."/>
            <person name="Shiraki T."/>
            <person name="Suzuki S."/>
            <person name="Tagami M."/>
            <person name="Waki K."/>
            <person name="Watahiki A."/>
            <person name="Okamura-Oho Y."/>
            <person name="Suzuki H."/>
            <person name="Kawai J."/>
            <person name="Hayashizaki Y."/>
        </authorList>
    </citation>
    <scope>NUCLEOTIDE SEQUENCE [LARGE SCALE MRNA]</scope>
    <source>
        <strain>C57BL/6J</strain>
        <tissue>Liver</tissue>
        <tissue>Thymus</tissue>
    </source>
</reference>
<reference key="3">
    <citation type="journal article" date="2004" name="Genome Res.">
        <title>The status, quality, and expansion of the NIH full-length cDNA project: the Mammalian Gene Collection (MGC).</title>
        <authorList>
            <consortium name="The MGC Project Team"/>
        </authorList>
    </citation>
    <scope>NUCLEOTIDE SEQUENCE [LARGE SCALE MRNA]</scope>
    <source>
        <strain>FVB/N</strain>
        <tissue>Liver</tissue>
    </source>
</reference>
<reference key="4">
    <citation type="journal article" date="2010" name="Cell">
        <title>A tissue-specific atlas of mouse protein phosphorylation and expression.</title>
        <authorList>
            <person name="Huttlin E.L."/>
            <person name="Jedrychowski M.P."/>
            <person name="Elias J.E."/>
            <person name="Goswami T."/>
            <person name="Rad R."/>
            <person name="Beausoleil S.A."/>
            <person name="Villen J."/>
            <person name="Haas W."/>
            <person name="Sowa M.E."/>
            <person name="Gygi S.P."/>
        </authorList>
    </citation>
    <scope>IDENTIFICATION BY MASS SPECTROMETRY [LARGE SCALE ANALYSIS]</scope>
    <source>
        <tissue>Liver</tissue>
        <tissue>Lung</tissue>
        <tissue>Pancreas</tissue>
    </source>
</reference>
<proteinExistence type="evidence at protein level"/>
<evidence type="ECO:0000250" key="1">
    <source>
        <dbReference type="UniProtKB" id="P0A817"/>
    </source>
</evidence>
<evidence type="ECO:0000250" key="2">
    <source>
        <dbReference type="UniProtKB" id="P13444"/>
    </source>
</evidence>
<evidence type="ECO:0000250" key="3">
    <source>
        <dbReference type="UniProtKB" id="Q00266"/>
    </source>
</evidence>
<evidence type="ECO:0000269" key="4">
    <source>
    </source>
</evidence>
<evidence type="ECO:0000305" key="5"/>
<protein>
    <recommendedName>
        <fullName>S-adenosylmethionine synthase isoform type-1</fullName>
        <shortName>AdoMet synthase 1</shortName>
        <ecNumber evidence="4">2.5.1.6</ecNumber>
    </recommendedName>
    <alternativeName>
        <fullName>Methionine adenosyltransferase 1</fullName>
        <shortName>MAT 1</shortName>
    </alternativeName>
</protein>
<organism>
    <name type="scientific">Mus musculus</name>
    <name type="common">Mouse</name>
    <dbReference type="NCBI Taxonomy" id="10090"/>
    <lineage>
        <taxon>Eukaryota</taxon>
        <taxon>Metazoa</taxon>
        <taxon>Chordata</taxon>
        <taxon>Craniata</taxon>
        <taxon>Vertebrata</taxon>
        <taxon>Euteleostomi</taxon>
        <taxon>Mammalia</taxon>
        <taxon>Eutheria</taxon>
        <taxon>Euarchontoglires</taxon>
        <taxon>Glires</taxon>
        <taxon>Rodentia</taxon>
        <taxon>Myomorpha</taxon>
        <taxon>Muroidea</taxon>
        <taxon>Muridae</taxon>
        <taxon>Murinae</taxon>
        <taxon>Mus</taxon>
        <taxon>Mus</taxon>
    </lineage>
</organism>
<accession>Q91X83</accession>
<gene>
    <name type="primary">Mat1a</name>
</gene>
<dbReference type="EC" id="2.5.1.6" evidence="4"/>
<dbReference type="EMBL" id="AK149542">
    <property type="protein sequence ID" value="BAE28947.1"/>
    <property type="molecule type" value="mRNA"/>
</dbReference>
<dbReference type="EMBL" id="AK153832">
    <property type="protein sequence ID" value="BAE32202.1"/>
    <property type="molecule type" value="mRNA"/>
</dbReference>
<dbReference type="EMBL" id="BC011211">
    <property type="protein sequence ID" value="AAH11211.1"/>
    <property type="molecule type" value="mRNA"/>
</dbReference>
<dbReference type="CCDS" id="CCDS26959.1"/>
<dbReference type="PIR" id="A47151">
    <property type="entry name" value="A47151"/>
</dbReference>
<dbReference type="RefSeq" id="NP_598414.1">
    <property type="nucleotide sequence ID" value="NM_133653.3"/>
</dbReference>
<dbReference type="RefSeq" id="XP_006518513.1">
    <property type="nucleotide sequence ID" value="XM_006518450.3"/>
</dbReference>
<dbReference type="SMR" id="Q91X83"/>
<dbReference type="BioGRID" id="198092">
    <property type="interactions" value="1"/>
</dbReference>
<dbReference type="ComplexPortal" id="CPX-3182">
    <property type="entry name" value="Methionine adenosyltransferase complex variant 1"/>
</dbReference>
<dbReference type="ComplexPortal" id="CPX-3183">
    <property type="entry name" value="Methionine adenosyltransferase complex variant 3"/>
</dbReference>
<dbReference type="DIP" id="DIP-45874N"/>
<dbReference type="FunCoup" id="Q91X83">
    <property type="interactions" value="474"/>
</dbReference>
<dbReference type="IntAct" id="Q91X83">
    <property type="interactions" value="2"/>
</dbReference>
<dbReference type="STRING" id="10090.ENSMUSP00000153488"/>
<dbReference type="GlyGen" id="Q91X83">
    <property type="glycosylation" value="1 site, 1 O-linked glycan (1 site)"/>
</dbReference>
<dbReference type="iPTMnet" id="Q91X83"/>
<dbReference type="PhosphoSitePlus" id="Q91X83"/>
<dbReference type="SwissPalm" id="Q91X83"/>
<dbReference type="REPRODUCTION-2DPAGE" id="Q91X83"/>
<dbReference type="jPOST" id="Q91X83"/>
<dbReference type="PaxDb" id="10090-ENSMUSP00000044288"/>
<dbReference type="PeptideAtlas" id="Q91X83"/>
<dbReference type="ProteomicsDB" id="295725"/>
<dbReference type="Antibodypedia" id="29977">
    <property type="antibodies" value="256 antibodies from 34 providers"/>
</dbReference>
<dbReference type="DNASU" id="11720"/>
<dbReference type="Ensembl" id="ENSMUST00000047286.7">
    <property type="protein sequence ID" value="ENSMUSP00000044288.7"/>
    <property type="gene ID" value="ENSMUSG00000037798.8"/>
</dbReference>
<dbReference type="Ensembl" id="ENSMUST00000225720.2">
    <property type="protein sequence ID" value="ENSMUSP00000153488.2"/>
    <property type="gene ID" value="ENSMUSG00000037798.8"/>
</dbReference>
<dbReference type="GeneID" id="11720"/>
<dbReference type="KEGG" id="mmu:11720"/>
<dbReference type="UCSC" id="uc007tcm.2">
    <property type="organism name" value="mouse"/>
</dbReference>
<dbReference type="AGR" id="MGI:88017"/>
<dbReference type="CTD" id="4143"/>
<dbReference type="MGI" id="MGI:88017">
    <property type="gene designation" value="Mat1a"/>
</dbReference>
<dbReference type="VEuPathDB" id="HostDB:ENSMUSG00000037798"/>
<dbReference type="eggNOG" id="KOG1506">
    <property type="taxonomic scope" value="Eukaryota"/>
</dbReference>
<dbReference type="GeneTree" id="ENSGT00950000183185"/>
<dbReference type="HOGENOM" id="CLU_041802_0_1_1"/>
<dbReference type="InParanoid" id="Q91X83"/>
<dbReference type="OMA" id="DGLCDHT"/>
<dbReference type="OrthoDB" id="5852090at2759"/>
<dbReference type="PhylomeDB" id="Q91X83"/>
<dbReference type="TreeFam" id="TF300511"/>
<dbReference type="BRENDA" id="2.5.1.6">
    <property type="organism ID" value="3474"/>
</dbReference>
<dbReference type="Reactome" id="R-MMU-156581">
    <property type="pathway name" value="Methylation"/>
</dbReference>
<dbReference type="Reactome" id="R-MMU-1614635">
    <property type="pathway name" value="Sulfur amino acid metabolism"/>
</dbReference>
<dbReference type="Reactome" id="R-MMU-2408508">
    <property type="pathway name" value="Metabolism of ingested SeMet, Sec, MeSec into H2Se"/>
</dbReference>
<dbReference type="UniPathway" id="UPA00315">
    <property type="reaction ID" value="UER00080"/>
</dbReference>
<dbReference type="BioGRID-ORCS" id="11720">
    <property type="hits" value="2 hits in 77 CRISPR screens"/>
</dbReference>
<dbReference type="PRO" id="PR:Q91X83"/>
<dbReference type="Proteomes" id="UP000000589">
    <property type="component" value="Chromosome 14"/>
</dbReference>
<dbReference type="RNAct" id="Q91X83">
    <property type="molecule type" value="protein"/>
</dbReference>
<dbReference type="Bgee" id="ENSMUSG00000037798">
    <property type="expression patterns" value="Expressed in left lobe of liver and 54 other cell types or tissues"/>
</dbReference>
<dbReference type="ExpressionAtlas" id="Q91X83">
    <property type="expression patterns" value="baseline and differential"/>
</dbReference>
<dbReference type="GO" id="GO:0048269">
    <property type="term" value="C:methionine adenosyltransferase complex"/>
    <property type="evidence" value="ECO:0000266"/>
    <property type="project" value="ComplexPortal"/>
</dbReference>
<dbReference type="GO" id="GO:0005524">
    <property type="term" value="F:ATP binding"/>
    <property type="evidence" value="ECO:0007669"/>
    <property type="project" value="UniProtKB-KW"/>
</dbReference>
<dbReference type="GO" id="GO:0042802">
    <property type="term" value="F:identical protein binding"/>
    <property type="evidence" value="ECO:0007669"/>
    <property type="project" value="Ensembl"/>
</dbReference>
<dbReference type="GO" id="GO:0046872">
    <property type="term" value="F:metal ion binding"/>
    <property type="evidence" value="ECO:0007669"/>
    <property type="project" value="UniProtKB-KW"/>
</dbReference>
<dbReference type="GO" id="GO:0004478">
    <property type="term" value="F:methionine adenosyltransferase activity"/>
    <property type="evidence" value="ECO:0000250"/>
    <property type="project" value="UniProtKB"/>
</dbReference>
<dbReference type="GO" id="GO:0009087">
    <property type="term" value="P:methionine catabolic process"/>
    <property type="evidence" value="ECO:0000250"/>
    <property type="project" value="UniProtKB"/>
</dbReference>
<dbReference type="GO" id="GO:0006730">
    <property type="term" value="P:one-carbon metabolic process"/>
    <property type="evidence" value="ECO:0007669"/>
    <property type="project" value="UniProtKB-KW"/>
</dbReference>
<dbReference type="GO" id="GO:0051289">
    <property type="term" value="P:protein homotetramerization"/>
    <property type="evidence" value="ECO:0007669"/>
    <property type="project" value="Ensembl"/>
</dbReference>
<dbReference type="GO" id="GO:0006556">
    <property type="term" value="P:S-adenosylmethionine biosynthetic process"/>
    <property type="evidence" value="ECO:0000250"/>
    <property type="project" value="UniProtKB"/>
</dbReference>
<dbReference type="CDD" id="cd18079">
    <property type="entry name" value="S-AdoMet_synt"/>
    <property type="match status" value="1"/>
</dbReference>
<dbReference type="FunFam" id="3.30.300.10:FF:000001">
    <property type="entry name" value="S-adenosylmethionine synthase"/>
    <property type="match status" value="1"/>
</dbReference>
<dbReference type="FunFam" id="3.30.300.10:FF:000003">
    <property type="entry name" value="S-adenosylmethionine synthase"/>
    <property type="match status" value="1"/>
</dbReference>
<dbReference type="FunFam" id="3.30.300.10:FF:000004">
    <property type="entry name" value="S-adenosylmethionine synthase"/>
    <property type="match status" value="1"/>
</dbReference>
<dbReference type="Gene3D" id="3.30.300.10">
    <property type="match status" value="3"/>
</dbReference>
<dbReference type="HAMAP" id="MF_00086">
    <property type="entry name" value="S_AdoMet_synth1"/>
    <property type="match status" value="1"/>
</dbReference>
<dbReference type="InterPro" id="IPR022631">
    <property type="entry name" value="ADOMET_SYNTHASE_CS"/>
</dbReference>
<dbReference type="InterPro" id="IPR022630">
    <property type="entry name" value="S-AdoMet_synt_C"/>
</dbReference>
<dbReference type="InterPro" id="IPR022629">
    <property type="entry name" value="S-AdoMet_synt_central"/>
</dbReference>
<dbReference type="InterPro" id="IPR022628">
    <property type="entry name" value="S-AdoMet_synt_N"/>
</dbReference>
<dbReference type="InterPro" id="IPR002133">
    <property type="entry name" value="S-AdoMet_synthetase"/>
</dbReference>
<dbReference type="InterPro" id="IPR022636">
    <property type="entry name" value="S-AdoMet_synthetase_sfam"/>
</dbReference>
<dbReference type="NCBIfam" id="TIGR01034">
    <property type="entry name" value="metK"/>
    <property type="match status" value="1"/>
</dbReference>
<dbReference type="PANTHER" id="PTHR11964">
    <property type="entry name" value="S-ADENOSYLMETHIONINE SYNTHETASE"/>
    <property type="match status" value="1"/>
</dbReference>
<dbReference type="Pfam" id="PF02773">
    <property type="entry name" value="S-AdoMet_synt_C"/>
    <property type="match status" value="1"/>
</dbReference>
<dbReference type="Pfam" id="PF02772">
    <property type="entry name" value="S-AdoMet_synt_M"/>
    <property type="match status" value="1"/>
</dbReference>
<dbReference type="Pfam" id="PF00438">
    <property type="entry name" value="S-AdoMet_synt_N"/>
    <property type="match status" value="1"/>
</dbReference>
<dbReference type="PIRSF" id="PIRSF000497">
    <property type="entry name" value="MAT"/>
    <property type="match status" value="1"/>
</dbReference>
<dbReference type="SUPFAM" id="SSF55973">
    <property type="entry name" value="S-adenosylmethionine synthetase"/>
    <property type="match status" value="3"/>
</dbReference>
<dbReference type="PROSITE" id="PS00376">
    <property type="entry name" value="ADOMET_SYNTHASE_1"/>
    <property type="match status" value="1"/>
</dbReference>
<dbReference type="PROSITE" id="PS00377">
    <property type="entry name" value="ADOMET_SYNTHASE_2"/>
    <property type="match status" value="1"/>
</dbReference>
<comment type="function">
    <text evidence="4">Catalyzes the formation of S-adenosylmethionine from methionine and ATP. The reaction comprises two steps that are both catalyzed by the same enzyme: formation of S-adenosylmethionine (AdoMet) and triphosphate, and subsequent hydrolysis of the triphosphate.</text>
</comment>
<comment type="catalytic activity">
    <reaction evidence="4">
        <text>L-methionine + ATP + H2O = S-adenosyl-L-methionine + phosphate + diphosphate</text>
        <dbReference type="Rhea" id="RHEA:21080"/>
        <dbReference type="ChEBI" id="CHEBI:15377"/>
        <dbReference type="ChEBI" id="CHEBI:30616"/>
        <dbReference type="ChEBI" id="CHEBI:33019"/>
        <dbReference type="ChEBI" id="CHEBI:43474"/>
        <dbReference type="ChEBI" id="CHEBI:57844"/>
        <dbReference type="ChEBI" id="CHEBI:59789"/>
        <dbReference type="EC" id="2.5.1.6"/>
    </reaction>
</comment>
<comment type="cofactor">
    <cofactor evidence="2">
        <name>Mg(2+)</name>
        <dbReference type="ChEBI" id="CHEBI:18420"/>
    </cofactor>
    <text evidence="2">Binds 2 magnesium ions per subunit. The magnesium ions interact primarily with the substrate.</text>
</comment>
<comment type="cofactor">
    <cofactor evidence="2">
        <name>K(+)</name>
        <dbReference type="ChEBI" id="CHEBI:29103"/>
    </cofactor>
    <text evidence="2">Binds 1 potassium ion per subunit. The potassium ion interacts primarily with the substrate.</text>
</comment>
<comment type="pathway">
    <text evidence="4">Amino-acid biosynthesis; S-adenosyl-L-methionine biosynthesis; S-adenosyl-L-methionine from L-methionine: step 1/1.</text>
</comment>
<comment type="subunit">
    <text evidence="2">Homotetramer (MAT-I); dimer of dimers. Homodimer (MAT-III).</text>
</comment>
<comment type="PTM">
    <text evidence="2">S-nitrosylation of Cys-121 inactivates the enzyme.</text>
</comment>
<comment type="PTM">
    <text evidence="2">An intrachain disulfide bond can be formed. The protein structure shows that the relevant Cys residues are in a position that would permit formation of a disulfide bond.</text>
</comment>
<comment type="similarity">
    <text evidence="5">Belongs to the AdoMet synthase family.</text>
</comment>
<name>METK1_MOUSE</name>
<sequence>MNGPVDGLCDHSLSEEGAFMFTSESVGEGHPDKICDQISDAVLDAHLKQDPNAKVACETVCKTGMVLLCGEITSVAMVDYQRVVRDTIKHIGYDDSAKGFDFKTCNVLVALEQQSPDIAQCVHLDRNEEDVGAGDQGLMFGYATDETEECMPLTIVLAHKLNTRIADLRRSGVLPWLRPDSKTQVTVQYMQDNGAVIPVRIHTIVISVQHNEDITLEAMQEALKEQVIKAVVPAKYLDEDTVYHLQPSGRFVIGGPQGDAGVTGRKIIVDTYGGWGAHGGGAFSGKDYTKVDRSAAYAARWVAKSLVKAGLCRRVLVQVSYAIGVAEPLSISIFTYGTSNKTERELLEVVNKNFDLRPGVIVRDLDLKKPIYQKTACYGHFGRSEFPWEVPKKLVF</sequence>
<keyword id="KW-0067">ATP-binding</keyword>
<keyword id="KW-1015">Disulfide bond</keyword>
<keyword id="KW-0460">Magnesium</keyword>
<keyword id="KW-0479">Metal-binding</keyword>
<keyword id="KW-0547">Nucleotide-binding</keyword>
<keyword id="KW-0554">One-carbon metabolism</keyword>
<keyword id="KW-0630">Potassium</keyword>
<keyword id="KW-1185">Reference proteome</keyword>
<keyword id="KW-0702">S-nitrosylation</keyword>
<keyword id="KW-0808">Transferase</keyword>